<evidence type="ECO:0000250" key="1">
    <source>
        <dbReference type="UniProtKB" id="Q96DX5"/>
    </source>
</evidence>
<evidence type="ECO:0000255" key="2">
    <source>
        <dbReference type="PROSITE-ProRule" id="PRU00194"/>
    </source>
</evidence>
<evidence type="ECO:0000256" key="3">
    <source>
        <dbReference type="SAM" id="MobiDB-lite"/>
    </source>
</evidence>
<evidence type="ECO:0000269" key="4">
    <source>
    </source>
</evidence>
<evidence type="ECO:0000303" key="5">
    <source>
    </source>
</evidence>
<evidence type="ECO:0000305" key="6"/>
<evidence type="ECO:0000312" key="7">
    <source>
        <dbReference type="MGI" id="MGI:1916549"/>
    </source>
</evidence>
<feature type="chain" id="PRO_0000066941" description="Ankyrin repeat and SOCS box protein 9">
    <location>
        <begin position="1"/>
        <end position="290"/>
    </location>
</feature>
<feature type="repeat" description="ANK 1">
    <location>
        <begin position="31"/>
        <end position="60"/>
    </location>
</feature>
<feature type="repeat" description="ANK 2">
    <location>
        <begin position="64"/>
        <end position="93"/>
    </location>
</feature>
<feature type="repeat" description="ANK 3">
    <location>
        <begin position="97"/>
        <end position="126"/>
    </location>
</feature>
<feature type="repeat" description="ANK 4">
    <location>
        <begin position="129"/>
        <end position="158"/>
    </location>
</feature>
<feature type="repeat" description="ANK 5">
    <location>
        <begin position="162"/>
        <end position="191"/>
    </location>
</feature>
<feature type="repeat" description="ANK 6">
    <location>
        <begin position="194"/>
        <end position="223"/>
    </location>
</feature>
<feature type="domain" description="SOCS box" evidence="2">
    <location>
        <begin position="236"/>
        <end position="290"/>
    </location>
</feature>
<feature type="region of interest" description="Disordered" evidence="3">
    <location>
        <begin position="1"/>
        <end position="20"/>
    </location>
</feature>
<feature type="compositionally biased region" description="Basic and acidic residues" evidence="3">
    <location>
        <begin position="1"/>
        <end position="11"/>
    </location>
</feature>
<feature type="site" description="Essential for binding to CKB" evidence="1">
    <location>
        <position position="103"/>
    </location>
</feature>
<feature type="modified residue" description="N-acetylmethionine" evidence="1">
    <location>
        <position position="1"/>
    </location>
</feature>
<feature type="sequence conflict" description="In Ref. 1; AAK97492." evidence="6" ref="1">
    <original>S</original>
    <variation>C</variation>
    <location>
        <position position="275"/>
    </location>
</feature>
<organism>
    <name type="scientific">Mus musculus</name>
    <name type="common">Mouse</name>
    <dbReference type="NCBI Taxonomy" id="10090"/>
    <lineage>
        <taxon>Eukaryota</taxon>
        <taxon>Metazoa</taxon>
        <taxon>Chordata</taxon>
        <taxon>Craniata</taxon>
        <taxon>Vertebrata</taxon>
        <taxon>Euteleostomi</taxon>
        <taxon>Mammalia</taxon>
        <taxon>Eutheria</taxon>
        <taxon>Euarchontoglires</taxon>
        <taxon>Glires</taxon>
        <taxon>Rodentia</taxon>
        <taxon>Myomorpha</taxon>
        <taxon>Muroidea</taxon>
        <taxon>Muridae</taxon>
        <taxon>Murinae</taxon>
        <taxon>Mus</taxon>
        <taxon>Mus</taxon>
    </lineage>
</organism>
<name>ASB9_MOUSE</name>
<gene>
    <name evidence="7" type="primary">Asb9</name>
</gene>
<accession>Q91ZT8</accession>
<accession>Q6GT43</accession>
<accession>Q9DAF7</accession>
<proteinExistence type="evidence at protein level"/>
<dbReference type="EMBL" id="AF398970">
    <property type="protein sequence ID" value="AAK97492.1"/>
    <property type="molecule type" value="mRNA"/>
</dbReference>
<dbReference type="EMBL" id="AK005878">
    <property type="protein sequence ID" value="BAB24293.1"/>
    <property type="molecule type" value="mRNA"/>
</dbReference>
<dbReference type="EMBL" id="AL772243">
    <property type="status" value="NOT_ANNOTATED_CDS"/>
    <property type="molecule type" value="Genomic_DNA"/>
</dbReference>
<dbReference type="EMBL" id="CH466571">
    <property type="protein sequence ID" value="EDL40751.1"/>
    <property type="molecule type" value="Genomic_DNA"/>
</dbReference>
<dbReference type="EMBL" id="BC061038">
    <property type="protein sequence ID" value="AAH61038.1"/>
    <property type="molecule type" value="mRNA"/>
</dbReference>
<dbReference type="CCDS" id="CCDS30524.1"/>
<dbReference type="RefSeq" id="NP_081303.1">
    <property type="nucleotide sequence ID" value="NM_027027.2"/>
</dbReference>
<dbReference type="SMR" id="Q91ZT8"/>
<dbReference type="BioGRID" id="213344">
    <property type="interactions" value="1"/>
</dbReference>
<dbReference type="FunCoup" id="Q91ZT8">
    <property type="interactions" value="2"/>
</dbReference>
<dbReference type="STRING" id="10090.ENSMUSP00000033756"/>
<dbReference type="iPTMnet" id="Q91ZT8"/>
<dbReference type="PhosphoSitePlus" id="Q91ZT8"/>
<dbReference type="SwissPalm" id="Q91ZT8"/>
<dbReference type="PaxDb" id="10090-ENSMUSP00000033756"/>
<dbReference type="ProteomicsDB" id="277044"/>
<dbReference type="Antibodypedia" id="502">
    <property type="antibodies" value="168 antibodies from 28 providers"/>
</dbReference>
<dbReference type="DNASU" id="69299"/>
<dbReference type="Ensembl" id="ENSMUST00000033756.3">
    <property type="protein sequence ID" value="ENSMUSP00000033756.3"/>
    <property type="gene ID" value="ENSMUSG00000031384.3"/>
</dbReference>
<dbReference type="GeneID" id="69299"/>
<dbReference type="KEGG" id="mmu:69299"/>
<dbReference type="UCSC" id="uc009uvs.1">
    <property type="organism name" value="mouse"/>
</dbReference>
<dbReference type="AGR" id="MGI:1916549"/>
<dbReference type="CTD" id="140462"/>
<dbReference type="MGI" id="MGI:1916549">
    <property type="gene designation" value="Asb9"/>
</dbReference>
<dbReference type="VEuPathDB" id="HostDB:ENSMUSG00000031384"/>
<dbReference type="eggNOG" id="KOG0504">
    <property type="taxonomic scope" value="Eukaryota"/>
</dbReference>
<dbReference type="GeneTree" id="ENSGT00940000157160"/>
<dbReference type="HOGENOM" id="CLU_000134_4_0_1"/>
<dbReference type="InParanoid" id="Q91ZT8"/>
<dbReference type="OMA" id="QHHKITG"/>
<dbReference type="OrthoDB" id="3246549at2759"/>
<dbReference type="PhylomeDB" id="Q91ZT8"/>
<dbReference type="TreeFam" id="TF331945"/>
<dbReference type="Reactome" id="R-MMU-8951664">
    <property type="pathway name" value="Neddylation"/>
</dbReference>
<dbReference type="Reactome" id="R-MMU-983168">
    <property type="pathway name" value="Antigen processing: Ubiquitination &amp; Proteasome degradation"/>
</dbReference>
<dbReference type="UniPathway" id="UPA00143"/>
<dbReference type="BioGRID-ORCS" id="69299">
    <property type="hits" value="1 hit in 78 CRISPR screens"/>
</dbReference>
<dbReference type="ChiTaRS" id="Asb9">
    <property type="organism name" value="mouse"/>
</dbReference>
<dbReference type="PRO" id="PR:Q91ZT8"/>
<dbReference type="Proteomes" id="UP000000589">
    <property type="component" value="Chromosome X"/>
</dbReference>
<dbReference type="RNAct" id="Q91ZT8">
    <property type="molecule type" value="protein"/>
</dbReference>
<dbReference type="Bgee" id="ENSMUSG00000031384">
    <property type="expression patterns" value="Expressed in spermatid and 31 other cell types or tissues"/>
</dbReference>
<dbReference type="GO" id="GO:0031466">
    <property type="term" value="C:Cul5-RING ubiquitin ligase complex"/>
    <property type="evidence" value="ECO:0000250"/>
    <property type="project" value="UniProtKB"/>
</dbReference>
<dbReference type="GO" id="GO:0005739">
    <property type="term" value="C:mitochondrion"/>
    <property type="evidence" value="ECO:0007669"/>
    <property type="project" value="UniProtKB-SubCell"/>
</dbReference>
<dbReference type="GO" id="GO:1990756">
    <property type="term" value="F:ubiquitin-like ligase-substrate adaptor activity"/>
    <property type="evidence" value="ECO:0000314"/>
    <property type="project" value="UniProtKB"/>
</dbReference>
<dbReference type="GO" id="GO:0035556">
    <property type="term" value="P:intracellular signal transduction"/>
    <property type="evidence" value="ECO:0007669"/>
    <property type="project" value="InterPro"/>
</dbReference>
<dbReference type="GO" id="GO:0045732">
    <property type="term" value="P:positive regulation of protein catabolic process"/>
    <property type="evidence" value="ECO:0000266"/>
    <property type="project" value="MGI"/>
</dbReference>
<dbReference type="GO" id="GO:0043161">
    <property type="term" value="P:proteasome-mediated ubiquitin-dependent protein catabolic process"/>
    <property type="evidence" value="ECO:0000250"/>
    <property type="project" value="UniProtKB"/>
</dbReference>
<dbReference type="GO" id="GO:0016567">
    <property type="term" value="P:protein ubiquitination"/>
    <property type="evidence" value="ECO:0000266"/>
    <property type="project" value="MGI"/>
</dbReference>
<dbReference type="FunFam" id="1.10.750.20:FF:000001">
    <property type="entry name" value="Ankyrin repeat and SOCS box containing 1"/>
    <property type="match status" value="1"/>
</dbReference>
<dbReference type="FunFam" id="1.25.40.20:FF:000016">
    <property type="entry name" value="Ankyrin repeat and SOCS box containing 5"/>
    <property type="match status" value="1"/>
</dbReference>
<dbReference type="Gene3D" id="1.25.40.20">
    <property type="entry name" value="Ankyrin repeat-containing domain"/>
    <property type="match status" value="1"/>
</dbReference>
<dbReference type="Gene3D" id="1.10.750.20">
    <property type="entry name" value="SOCS box"/>
    <property type="match status" value="1"/>
</dbReference>
<dbReference type="InterPro" id="IPR051573">
    <property type="entry name" value="Ankyrin-SOCS_box_domain"/>
</dbReference>
<dbReference type="InterPro" id="IPR002110">
    <property type="entry name" value="Ankyrin_rpt"/>
</dbReference>
<dbReference type="InterPro" id="IPR036770">
    <property type="entry name" value="Ankyrin_rpt-contain_sf"/>
</dbReference>
<dbReference type="InterPro" id="IPR001496">
    <property type="entry name" value="SOCS_box"/>
</dbReference>
<dbReference type="InterPro" id="IPR036036">
    <property type="entry name" value="SOCS_box-like_dom_sf"/>
</dbReference>
<dbReference type="PANTHER" id="PTHR24136:SF17">
    <property type="entry name" value="ANKYRIN REPEAT AND SOCS BOX PROTEIN 9"/>
    <property type="match status" value="1"/>
</dbReference>
<dbReference type="PANTHER" id="PTHR24136">
    <property type="entry name" value="SOWAH (DROSOPHILA) HOMOLOG"/>
    <property type="match status" value="1"/>
</dbReference>
<dbReference type="Pfam" id="PF00023">
    <property type="entry name" value="Ank"/>
    <property type="match status" value="1"/>
</dbReference>
<dbReference type="Pfam" id="PF12796">
    <property type="entry name" value="Ank_2"/>
    <property type="match status" value="2"/>
</dbReference>
<dbReference type="Pfam" id="PF07525">
    <property type="entry name" value="SOCS_box"/>
    <property type="match status" value="1"/>
</dbReference>
<dbReference type="SMART" id="SM00248">
    <property type="entry name" value="ANK"/>
    <property type="match status" value="6"/>
</dbReference>
<dbReference type="SMART" id="SM00969">
    <property type="entry name" value="SOCS_box"/>
    <property type="match status" value="1"/>
</dbReference>
<dbReference type="SUPFAM" id="SSF48403">
    <property type="entry name" value="Ankyrin repeat"/>
    <property type="match status" value="1"/>
</dbReference>
<dbReference type="SUPFAM" id="SSF158235">
    <property type="entry name" value="SOCS box-like"/>
    <property type="match status" value="1"/>
</dbReference>
<dbReference type="PROSITE" id="PS50297">
    <property type="entry name" value="ANK_REP_REGION"/>
    <property type="match status" value="1"/>
</dbReference>
<dbReference type="PROSITE" id="PS50088">
    <property type="entry name" value="ANK_REPEAT"/>
    <property type="match status" value="4"/>
</dbReference>
<dbReference type="PROSITE" id="PS50225">
    <property type="entry name" value="SOCS"/>
    <property type="match status" value="1"/>
</dbReference>
<protein>
    <recommendedName>
        <fullName evidence="6">Ankyrin repeat and SOCS box protein 9</fullName>
        <shortName evidence="5">ASB-9</shortName>
    </recommendedName>
</protein>
<keyword id="KW-0007">Acetylation</keyword>
<keyword id="KW-0040">ANK repeat</keyword>
<keyword id="KW-0496">Mitochondrion</keyword>
<keyword id="KW-1185">Reference proteome</keyword>
<keyword id="KW-0677">Repeat</keyword>
<keyword id="KW-0833">Ubl conjugation pathway</keyword>
<sequence>MDGEQRGRSDRPGGSPHLPFLSNPLMGDVVSDWSPLHDAAIHGCLLTLRNLISQGWPVNIITADHVSPLHEACLRGHLSCASVLLSHGAQVNGMTIDWRTPLFNACVSGSQDCVNLLLQHGATPHPETELASPIHEAAKRGYVKCIESLAAHGANIDYNISHLGTPLYVACKNQQVACAKKLLESGVSVNQGKGLDSPLHVVARMSSVELVHLLMDFGANAQAKNADGKRPVDLVPLESPLIQIFLQNEGPQSLRQLCRLRIRKCFGIRQHHKISELLLPEDLKRFLLHL</sequence>
<comment type="function">
    <text evidence="4">Substrate-recognition component of a cullin-5-RING E3 ubiquitin-protein ligase complex (ECS complex, also named CRL5 complex), which mediates the ubiquitination and subsequent proteasomal degradation of target proteins (PubMed:17148442). The ECS(ASB9) complex catalyzes ubiquitination of creatine kinases CKB and CKMT1A (PubMed:17148442).</text>
</comment>
<comment type="pathway">
    <text evidence="4">Protein modification; protein ubiquitination.</text>
</comment>
<comment type="subunit">
    <text evidence="1">Substrate-recognition component of the ECS(ASB9) complex, composed of ASB9, CUL5, ELOB, ELOC and RNF7/RBX2.</text>
</comment>
<comment type="subcellular location">
    <subcellularLocation>
        <location evidence="1">Mitochondrion</location>
    </subcellularLocation>
</comment>
<comment type="similarity">
    <text evidence="6">Belongs to the ankyrin SOCS box (ASB) family.</text>
</comment>
<reference key="1">
    <citation type="journal article" date="2001" name="Mol. Cell. Biol.">
        <title>Functional analysis of Asb-1 using genetic modification in mice.</title>
        <authorList>
            <person name="Kile B.T."/>
            <person name="Metcalf D."/>
            <person name="Mifsud S."/>
            <person name="DiRago L."/>
            <person name="Nicola N.A."/>
            <person name="Hilton D.J."/>
            <person name="Alexander W.S."/>
        </authorList>
    </citation>
    <scope>NUCLEOTIDE SEQUENCE [MRNA]</scope>
</reference>
<reference key="2">
    <citation type="journal article" date="2009" name="PLoS Biol.">
        <title>Lineage-specific biology revealed by a finished genome assembly of the mouse.</title>
        <authorList>
            <person name="Church D.M."/>
            <person name="Goodstadt L."/>
            <person name="Hillier L.W."/>
            <person name="Zody M.C."/>
            <person name="Goldstein S."/>
            <person name="She X."/>
            <person name="Bult C.J."/>
            <person name="Agarwala R."/>
            <person name="Cherry J.L."/>
            <person name="DiCuccio M."/>
            <person name="Hlavina W."/>
            <person name="Kapustin Y."/>
            <person name="Meric P."/>
            <person name="Maglott D."/>
            <person name="Birtle Z."/>
            <person name="Marques A.C."/>
            <person name="Graves T."/>
            <person name="Zhou S."/>
            <person name="Teague B."/>
            <person name="Potamousis K."/>
            <person name="Churas C."/>
            <person name="Place M."/>
            <person name="Herschleb J."/>
            <person name="Runnheim R."/>
            <person name="Forrest D."/>
            <person name="Amos-Landgraf J."/>
            <person name="Schwartz D.C."/>
            <person name="Cheng Z."/>
            <person name="Lindblad-Toh K."/>
            <person name="Eichler E.E."/>
            <person name="Ponting C.P."/>
        </authorList>
    </citation>
    <scope>NUCLEOTIDE SEQUENCE [LARGE SCALE GENOMIC DNA]</scope>
    <source>
        <strain>C57BL/6J</strain>
    </source>
</reference>
<reference key="3">
    <citation type="submission" date="2005-07" db="EMBL/GenBank/DDBJ databases">
        <authorList>
            <person name="Mural R.J."/>
            <person name="Adams M.D."/>
            <person name="Myers E.W."/>
            <person name="Smith H.O."/>
            <person name="Venter J.C."/>
        </authorList>
    </citation>
    <scope>NUCLEOTIDE SEQUENCE [LARGE SCALE GENOMIC DNA]</scope>
</reference>
<reference key="4">
    <citation type="journal article" date="2004" name="Genome Res.">
        <title>The status, quality, and expansion of the NIH full-length cDNA project: the Mammalian Gene Collection (MGC).</title>
        <authorList>
            <consortium name="The MGC Project Team"/>
        </authorList>
    </citation>
    <scope>NUCLEOTIDE SEQUENCE [LARGE SCALE MRNA]</scope>
    <source>
        <strain>C57BL/6J</strain>
        <tissue>Testis</tissue>
    </source>
</reference>
<reference key="5">
    <citation type="journal article" date="2010" name="Cell">
        <title>A tissue-specific atlas of mouse protein phosphorylation and expression.</title>
        <authorList>
            <person name="Huttlin E.L."/>
            <person name="Jedrychowski M.P."/>
            <person name="Elias J.E."/>
            <person name="Goswami T."/>
            <person name="Rad R."/>
            <person name="Beausoleil S.A."/>
            <person name="Villen J."/>
            <person name="Haas W."/>
            <person name="Sowa M.E."/>
            <person name="Gygi S.P."/>
        </authorList>
    </citation>
    <scope>IDENTIFICATION BY MASS SPECTROMETRY [LARGE SCALE ANALYSIS]</scope>
    <source>
        <tissue>Kidney</tissue>
        <tissue>Testis</tissue>
    </source>
</reference>
<reference key="6">
    <citation type="journal article" date="2007" name="J. Biol. Chem.">
        <title>Ankyrin repeat and suppressors of cytokine signaling box protein asb-9 targets creatine kinase B for degradation.</title>
        <authorList>
            <person name="Debrincat M.A."/>
            <person name="Zhang J.G."/>
            <person name="Willson T.A."/>
            <person name="Silke J."/>
            <person name="Connolly L.M."/>
            <person name="Simpson R.J."/>
            <person name="Alexander W.S."/>
            <person name="Nicola N.A."/>
            <person name="Kile B.T."/>
            <person name="Hilton D.J."/>
        </authorList>
    </citation>
    <scope>FUNCTION</scope>
    <scope>PATHWAY</scope>
</reference>